<comment type="function">
    <text evidence="1">Reversibly transfers an adenylyl group from ATP to 4'-phosphopantetheine, yielding dephospho-CoA (dPCoA) and pyrophosphate.</text>
</comment>
<comment type="catalytic activity">
    <reaction evidence="1">
        <text>(R)-4'-phosphopantetheine + ATP + H(+) = 3'-dephospho-CoA + diphosphate</text>
        <dbReference type="Rhea" id="RHEA:19801"/>
        <dbReference type="ChEBI" id="CHEBI:15378"/>
        <dbReference type="ChEBI" id="CHEBI:30616"/>
        <dbReference type="ChEBI" id="CHEBI:33019"/>
        <dbReference type="ChEBI" id="CHEBI:57328"/>
        <dbReference type="ChEBI" id="CHEBI:61723"/>
        <dbReference type="EC" id="2.7.7.3"/>
    </reaction>
</comment>
<comment type="cofactor">
    <cofactor evidence="1">
        <name>Mg(2+)</name>
        <dbReference type="ChEBI" id="CHEBI:18420"/>
    </cofactor>
</comment>
<comment type="pathway">
    <text evidence="1">Cofactor biosynthesis; coenzyme A biosynthesis; CoA from (R)-pantothenate: step 4/5.</text>
</comment>
<comment type="subunit">
    <text evidence="1">Homohexamer.</text>
</comment>
<comment type="subcellular location">
    <subcellularLocation>
        <location evidence="1">Cytoplasm</location>
    </subcellularLocation>
</comment>
<comment type="similarity">
    <text evidence="1">Belongs to the bacterial CoaD family.</text>
</comment>
<gene>
    <name evidence="1" type="primary">coaD</name>
    <name type="ordered locus">BruAb1_1101</name>
</gene>
<keyword id="KW-0067">ATP-binding</keyword>
<keyword id="KW-0173">Coenzyme A biosynthesis</keyword>
<keyword id="KW-0963">Cytoplasm</keyword>
<keyword id="KW-0460">Magnesium</keyword>
<keyword id="KW-0547">Nucleotide-binding</keyword>
<keyword id="KW-0548">Nucleotidyltransferase</keyword>
<keyword id="KW-0808">Transferase</keyword>
<protein>
    <recommendedName>
        <fullName evidence="1">Phosphopantetheine adenylyltransferase</fullName>
        <ecNumber evidence="1">2.7.7.3</ecNumber>
    </recommendedName>
    <alternativeName>
        <fullName evidence="1">Dephospho-CoA pyrophosphorylase</fullName>
    </alternativeName>
    <alternativeName>
        <fullName evidence="1">Pantetheine-phosphate adenylyltransferase</fullName>
        <shortName evidence="1">PPAT</shortName>
    </alternativeName>
</protein>
<feature type="chain" id="PRO_1000011101" description="Phosphopantetheine adenylyltransferase">
    <location>
        <begin position="1"/>
        <end position="164"/>
    </location>
</feature>
<feature type="binding site" evidence="1">
    <location>
        <begin position="9"/>
        <end position="10"/>
    </location>
    <ligand>
        <name>ATP</name>
        <dbReference type="ChEBI" id="CHEBI:30616"/>
    </ligand>
</feature>
<feature type="binding site" evidence="1">
    <location>
        <position position="9"/>
    </location>
    <ligand>
        <name>substrate</name>
    </ligand>
</feature>
<feature type="binding site" evidence="1">
    <location>
        <position position="17"/>
    </location>
    <ligand>
        <name>ATP</name>
        <dbReference type="ChEBI" id="CHEBI:30616"/>
    </ligand>
</feature>
<feature type="binding site" evidence="1">
    <location>
        <position position="41"/>
    </location>
    <ligand>
        <name>substrate</name>
    </ligand>
</feature>
<feature type="binding site" evidence="1">
    <location>
        <position position="78"/>
    </location>
    <ligand>
        <name>substrate</name>
    </ligand>
</feature>
<feature type="binding site" evidence="1">
    <location>
        <position position="92"/>
    </location>
    <ligand>
        <name>substrate</name>
    </ligand>
</feature>
<feature type="binding site" evidence="1">
    <location>
        <begin position="93"/>
        <end position="95"/>
    </location>
    <ligand>
        <name>ATP</name>
        <dbReference type="ChEBI" id="CHEBI:30616"/>
    </ligand>
</feature>
<feature type="binding site" evidence="1">
    <location>
        <position position="103"/>
    </location>
    <ligand>
        <name>ATP</name>
        <dbReference type="ChEBI" id="CHEBI:30616"/>
    </ligand>
</feature>
<feature type="binding site" evidence="1">
    <location>
        <begin position="128"/>
        <end position="134"/>
    </location>
    <ligand>
        <name>ATP</name>
        <dbReference type="ChEBI" id="CHEBI:30616"/>
    </ligand>
</feature>
<feature type="site" description="Transition state stabilizer" evidence="1">
    <location>
        <position position="17"/>
    </location>
</feature>
<organism>
    <name type="scientific">Brucella abortus biovar 1 (strain 9-941)</name>
    <dbReference type="NCBI Taxonomy" id="262698"/>
    <lineage>
        <taxon>Bacteria</taxon>
        <taxon>Pseudomonadati</taxon>
        <taxon>Pseudomonadota</taxon>
        <taxon>Alphaproteobacteria</taxon>
        <taxon>Hyphomicrobiales</taxon>
        <taxon>Brucellaceae</taxon>
        <taxon>Brucella/Ochrobactrum group</taxon>
        <taxon>Brucella</taxon>
    </lineage>
</organism>
<proteinExistence type="inferred from homology"/>
<evidence type="ECO:0000255" key="1">
    <source>
        <dbReference type="HAMAP-Rule" id="MF_00151"/>
    </source>
</evidence>
<accession>Q57D42</accession>
<sequence length="164" mass="17399">MTIAIYAGSFDPVTNGHIDVLKGALRLADQVIVAIGMHPGKKPLFSFDERVALIEASAKAVLHKDAARVSVIAFDGLVIDAARKHGAQLMVRGLRDGTDLDYEMQMAGMNGTMAPELQTVFLPADPAVRTITATLVRQIASMGGDIKPFVPVAVAAALNTKFKS</sequence>
<name>COAD_BRUAB</name>
<reference key="1">
    <citation type="journal article" date="2005" name="J. Bacteriol.">
        <title>Completion of the genome sequence of Brucella abortus and comparison to the highly similar genomes of Brucella melitensis and Brucella suis.</title>
        <authorList>
            <person name="Halling S.M."/>
            <person name="Peterson-Burch B.D."/>
            <person name="Bricker B.J."/>
            <person name="Zuerner R.L."/>
            <person name="Qing Z."/>
            <person name="Li L.-L."/>
            <person name="Kapur V."/>
            <person name="Alt D.P."/>
            <person name="Olsen S.C."/>
        </authorList>
    </citation>
    <scope>NUCLEOTIDE SEQUENCE [LARGE SCALE GENOMIC DNA]</scope>
    <source>
        <strain>9-941</strain>
    </source>
</reference>
<dbReference type="EC" id="2.7.7.3" evidence="1"/>
<dbReference type="EMBL" id="AE017223">
    <property type="protein sequence ID" value="AAX74442.1"/>
    <property type="molecule type" value="Genomic_DNA"/>
</dbReference>
<dbReference type="RefSeq" id="WP_002964224.1">
    <property type="nucleotide sequence ID" value="NC_006932.1"/>
</dbReference>
<dbReference type="SMR" id="Q57D42"/>
<dbReference type="EnsemblBacteria" id="AAX74442">
    <property type="protein sequence ID" value="AAX74442"/>
    <property type="gene ID" value="BruAb1_1101"/>
</dbReference>
<dbReference type="GeneID" id="93016563"/>
<dbReference type="KEGG" id="bmb:BruAb1_1101"/>
<dbReference type="HOGENOM" id="CLU_100149_0_1_5"/>
<dbReference type="UniPathway" id="UPA00241">
    <property type="reaction ID" value="UER00355"/>
</dbReference>
<dbReference type="Proteomes" id="UP000000540">
    <property type="component" value="Chromosome I"/>
</dbReference>
<dbReference type="GO" id="GO:0005737">
    <property type="term" value="C:cytoplasm"/>
    <property type="evidence" value="ECO:0007669"/>
    <property type="project" value="UniProtKB-SubCell"/>
</dbReference>
<dbReference type="GO" id="GO:0005524">
    <property type="term" value="F:ATP binding"/>
    <property type="evidence" value="ECO:0007669"/>
    <property type="project" value="UniProtKB-KW"/>
</dbReference>
<dbReference type="GO" id="GO:0004595">
    <property type="term" value="F:pantetheine-phosphate adenylyltransferase activity"/>
    <property type="evidence" value="ECO:0007669"/>
    <property type="project" value="UniProtKB-UniRule"/>
</dbReference>
<dbReference type="GO" id="GO:0015937">
    <property type="term" value="P:coenzyme A biosynthetic process"/>
    <property type="evidence" value="ECO:0007669"/>
    <property type="project" value="UniProtKB-UniRule"/>
</dbReference>
<dbReference type="CDD" id="cd02163">
    <property type="entry name" value="PPAT"/>
    <property type="match status" value="1"/>
</dbReference>
<dbReference type="Gene3D" id="3.40.50.620">
    <property type="entry name" value="HUPs"/>
    <property type="match status" value="1"/>
</dbReference>
<dbReference type="HAMAP" id="MF_00151">
    <property type="entry name" value="PPAT_bact"/>
    <property type="match status" value="1"/>
</dbReference>
<dbReference type="InterPro" id="IPR004821">
    <property type="entry name" value="Cyt_trans-like"/>
</dbReference>
<dbReference type="InterPro" id="IPR001980">
    <property type="entry name" value="PPAT"/>
</dbReference>
<dbReference type="InterPro" id="IPR014729">
    <property type="entry name" value="Rossmann-like_a/b/a_fold"/>
</dbReference>
<dbReference type="NCBIfam" id="TIGR01510">
    <property type="entry name" value="coaD_prev_kdtB"/>
    <property type="match status" value="1"/>
</dbReference>
<dbReference type="NCBIfam" id="TIGR00125">
    <property type="entry name" value="cyt_tran_rel"/>
    <property type="match status" value="1"/>
</dbReference>
<dbReference type="PANTHER" id="PTHR21342">
    <property type="entry name" value="PHOSPHOPANTETHEINE ADENYLYLTRANSFERASE"/>
    <property type="match status" value="1"/>
</dbReference>
<dbReference type="PANTHER" id="PTHR21342:SF1">
    <property type="entry name" value="PHOSPHOPANTETHEINE ADENYLYLTRANSFERASE"/>
    <property type="match status" value="1"/>
</dbReference>
<dbReference type="Pfam" id="PF01467">
    <property type="entry name" value="CTP_transf_like"/>
    <property type="match status" value="1"/>
</dbReference>
<dbReference type="PRINTS" id="PR01020">
    <property type="entry name" value="LPSBIOSNTHSS"/>
</dbReference>
<dbReference type="SUPFAM" id="SSF52374">
    <property type="entry name" value="Nucleotidylyl transferase"/>
    <property type="match status" value="1"/>
</dbReference>